<keyword id="KW-0256">Endoplasmic reticulum</keyword>
<keyword id="KW-0349">Heme</keyword>
<keyword id="KW-0408">Iron</keyword>
<keyword id="KW-0472">Membrane</keyword>
<keyword id="KW-0479">Metal-binding</keyword>
<keyword id="KW-0492">Microsome</keyword>
<keyword id="KW-0503">Monooxygenase</keyword>
<keyword id="KW-0560">Oxidoreductase</keyword>
<dbReference type="EC" id="1.14.14.1"/>
<dbReference type="EMBL" id="S69277">
    <property type="protein sequence ID" value="AAD14035.1"/>
    <property type="molecule type" value="Genomic_DNA"/>
</dbReference>
<dbReference type="EMBL" id="U62796">
    <property type="protein sequence ID" value="AAB40626.1"/>
    <property type="molecule type" value="mRNA"/>
</dbReference>
<dbReference type="EMBL" id="M21310">
    <property type="protein sequence ID" value="AAA49550.1"/>
    <property type="status" value="ALT_SEQ"/>
    <property type="molecule type" value="mRNA"/>
</dbReference>
<dbReference type="SMR" id="Q92109"/>
<dbReference type="Proteomes" id="UP000694395">
    <property type="component" value="Unplaced"/>
</dbReference>
<dbReference type="GO" id="GO:0009925">
    <property type="term" value="C:basal plasma membrane"/>
    <property type="evidence" value="ECO:0000314"/>
    <property type="project" value="AgBase"/>
</dbReference>
<dbReference type="GO" id="GO:0005737">
    <property type="term" value="C:cytoplasm"/>
    <property type="evidence" value="ECO:0000314"/>
    <property type="project" value="AgBase"/>
</dbReference>
<dbReference type="GO" id="GO:0005789">
    <property type="term" value="C:endoplasmic reticulum membrane"/>
    <property type="evidence" value="ECO:0007669"/>
    <property type="project" value="UniProtKB-SubCell"/>
</dbReference>
<dbReference type="GO" id="GO:0000792">
    <property type="term" value="C:heterochromatin"/>
    <property type="evidence" value="ECO:0000314"/>
    <property type="project" value="AgBase"/>
</dbReference>
<dbReference type="GO" id="GO:0031528">
    <property type="term" value="C:microvillus membrane"/>
    <property type="evidence" value="ECO:0000314"/>
    <property type="project" value="AgBase"/>
</dbReference>
<dbReference type="GO" id="GO:0031965">
    <property type="term" value="C:nuclear membrane"/>
    <property type="evidence" value="ECO:0000314"/>
    <property type="project" value="AgBase"/>
</dbReference>
<dbReference type="GO" id="GO:0048471">
    <property type="term" value="C:perinuclear region of cytoplasm"/>
    <property type="evidence" value="ECO:0000314"/>
    <property type="project" value="AgBase"/>
</dbReference>
<dbReference type="GO" id="GO:0005791">
    <property type="term" value="C:rough endoplasmic reticulum"/>
    <property type="evidence" value="ECO:0000314"/>
    <property type="project" value="AgBase"/>
</dbReference>
<dbReference type="GO" id="GO:0005790">
    <property type="term" value="C:smooth endoplasmic reticulum"/>
    <property type="evidence" value="ECO:0000314"/>
    <property type="project" value="AgBase"/>
</dbReference>
<dbReference type="GO" id="GO:0003824">
    <property type="term" value="F:catalytic activity"/>
    <property type="evidence" value="ECO:0000314"/>
    <property type="project" value="AgBase"/>
</dbReference>
<dbReference type="GO" id="GO:0020037">
    <property type="term" value="F:heme binding"/>
    <property type="evidence" value="ECO:0007669"/>
    <property type="project" value="InterPro"/>
</dbReference>
<dbReference type="GO" id="GO:0005506">
    <property type="term" value="F:iron ion binding"/>
    <property type="evidence" value="ECO:0007669"/>
    <property type="project" value="InterPro"/>
</dbReference>
<dbReference type="GO" id="GO:0004508">
    <property type="term" value="F:steroid 17-alpha-monooxygenase activity"/>
    <property type="evidence" value="ECO:0007669"/>
    <property type="project" value="TreeGrafter"/>
</dbReference>
<dbReference type="GO" id="GO:0042446">
    <property type="term" value="P:hormone biosynthetic process"/>
    <property type="evidence" value="ECO:0007669"/>
    <property type="project" value="TreeGrafter"/>
</dbReference>
<dbReference type="GO" id="GO:0042448">
    <property type="term" value="P:progesterone metabolic process"/>
    <property type="evidence" value="ECO:0007669"/>
    <property type="project" value="TreeGrafter"/>
</dbReference>
<dbReference type="GO" id="GO:1903165">
    <property type="term" value="P:response to polycyclic arene"/>
    <property type="evidence" value="ECO:0000314"/>
    <property type="project" value="AgBase"/>
</dbReference>
<dbReference type="CDD" id="cd20676">
    <property type="entry name" value="CYP1A"/>
    <property type="match status" value="1"/>
</dbReference>
<dbReference type="FunFam" id="1.10.630.10:FF:000002">
    <property type="entry name" value="Cytochrome P450 1A1"/>
    <property type="match status" value="1"/>
</dbReference>
<dbReference type="Gene3D" id="1.10.630.10">
    <property type="entry name" value="Cytochrome P450"/>
    <property type="match status" value="1"/>
</dbReference>
<dbReference type="InterPro" id="IPR001128">
    <property type="entry name" value="Cyt_P450"/>
</dbReference>
<dbReference type="InterPro" id="IPR017972">
    <property type="entry name" value="Cyt_P450_CS"/>
</dbReference>
<dbReference type="InterPro" id="IPR002401">
    <property type="entry name" value="Cyt_P450_E_grp-I"/>
</dbReference>
<dbReference type="InterPro" id="IPR008066">
    <property type="entry name" value="Cyt_P450_E_grp-I_CYP1"/>
</dbReference>
<dbReference type="InterPro" id="IPR036396">
    <property type="entry name" value="Cyt_P450_sf"/>
</dbReference>
<dbReference type="PANTHER" id="PTHR24289:SF21">
    <property type="entry name" value="CYTOCHROME P450 1A"/>
    <property type="match status" value="1"/>
</dbReference>
<dbReference type="PANTHER" id="PTHR24289">
    <property type="entry name" value="STEROID 17-ALPHA-HYDROXYLASE/17,20 LYASE"/>
    <property type="match status" value="1"/>
</dbReference>
<dbReference type="Pfam" id="PF00067">
    <property type="entry name" value="p450"/>
    <property type="match status" value="1"/>
</dbReference>
<dbReference type="PRINTS" id="PR00463">
    <property type="entry name" value="EP450I"/>
</dbReference>
<dbReference type="PRINTS" id="PR01683">
    <property type="entry name" value="EP450ICYP1A"/>
</dbReference>
<dbReference type="PRINTS" id="PR00385">
    <property type="entry name" value="P450"/>
</dbReference>
<dbReference type="SUPFAM" id="SSF48264">
    <property type="entry name" value="Cytochrome P450"/>
    <property type="match status" value="1"/>
</dbReference>
<dbReference type="PROSITE" id="PS00086">
    <property type="entry name" value="CYTOCHROME_P450"/>
    <property type="match status" value="1"/>
</dbReference>
<sequence length="522" mass="59273">MVLMILPIIGSVSASEGLVAMVTLCLVYMIMKYMHTEIPEGLKRLPGPKPLPIIGNMLEVHNNPHLSLTAMSERYGSVFQIQIGMRPVVVLSGNETVRQALIKQGEDFAGRSDLYSFKFINDGKSLAFSTDKAGVWRARRKLAMSALRSFATLEGTTPEYSCALEEHVLKEGEYLVKQLTSVMDVSGSFDPFRHIVVSVANVICGMCFGRRYSHDDQELLGLVNMSDEFGQVVGSGNPADFIPILRYLPNRTMKRFMDINDRFNNFVQKIVSEHYESYDKDNIRDITDSLIDHCEDRKLDENANIQVSDEKIVGIVNDLFGAGFDTISTALSWAVVYLVAYPETQERLHQELKEKVGMIRTPRLSDKINLPLLEAFILEIFRHSSFLPFTIPHCTIKDTSLNGYFIPKDTCVFINQWQVNHDPELWKEPSSFNPDRFLSADGTELNKLEGEKVLVFGMGKRRCIGEAIGRNEVYLFLAILLQRLRFQEKPGHPLDMTPEYGLTMKHKRCQLKASMRPWGQEE</sequence>
<feature type="chain" id="PRO_0000051642" description="Cytochrome P450 1A3">
    <location>
        <begin position="1"/>
        <end position="522"/>
    </location>
</feature>
<feature type="binding site" evidence="1">
    <location>
        <position position="229"/>
    </location>
    <ligand>
        <name>substrate</name>
    </ligand>
</feature>
<feature type="binding site" description="axial binding residue" evidence="1">
    <location>
        <position position="463"/>
    </location>
    <ligand>
        <name>heme</name>
        <dbReference type="ChEBI" id="CHEBI:30413"/>
    </ligand>
    <ligandPart>
        <name>Fe</name>
        <dbReference type="ChEBI" id="CHEBI:18248"/>
    </ligandPart>
</feature>
<feature type="sequence conflict" description="In Ref. 1; AAD14035/AAA49550." evidence="2" ref="1">
    <original>M</original>
    <variation>V</variation>
    <location>
        <position position="57"/>
    </location>
</feature>
<feature type="sequence conflict" description="In Ref. 1; AAD14035/AAA49550." evidence="2" ref="1">
    <original>N</original>
    <variation>S</variation>
    <location>
        <position position="94"/>
    </location>
</feature>
<feature type="sequence conflict" description="In Ref. 1; AAD14035/AAA49550." evidence="2" ref="1">
    <original>S</original>
    <variation>P</variation>
    <location>
        <position position="112"/>
    </location>
</feature>
<feature type="sequence conflict" description="In Ref. 1; AAD14035." evidence="2" ref="1">
    <original>T</original>
    <variation>S</variation>
    <location>
        <position position="156"/>
    </location>
</feature>
<feature type="sequence conflict" description="In Ref. 1; AAD14035/AAA49550." evidence="2" ref="1">
    <original>L</original>
    <variation>C</variation>
    <location>
        <position position="169"/>
    </location>
</feature>
<feature type="sequence conflict" description="In Ref. 1; AAD14035/AAA49550." evidence="2" ref="1">
    <original>N</original>
    <variation>T</variation>
    <location>
        <position position="265"/>
    </location>
</feature>
<feature type="sequence conflict" description="In Ref. 1; AAD14035." evidence="2" ref="1">
    <original>E</original>
    <variation>D</variation>
    <location>
        <position position="276"/>
    </location>
</feature>
<feature type="sequence conflict" description="In Ref. 1; AAD14035." evidence="2" ref="1">
    <original>I</original>
    <variation>V</variation>
    <location>
        <position position="305"/>
    </location>
</feature>
<feature type="sequence conflict" description="In Ref. 1; AAD14035/AAA49550." evidence="2" ref="1">
    <original>T</original>
    <variation>I</variation>
    <location>
        <position position="344"/>
    </location>
</feature>
<feature type="sequence conflict" description="In Ref. 1; AAD14035." evidence="2" ref="1">
    <original>I</original>
    <variation>V</variation>
    <location>
        <position position="396"/>
    </location>
</feature>
<feature type="sequence conflict" description="In Ref. 1; AAD14035." evidence="2" ref="1">
    <original>R</original>
    <variation>C</variation>
    <location>
        <position position="485"/>
    </location>
</feature>
<feature type="sequence conflict" description="In Ref. 1; AAD14035." evidence="2" ref="1">
    <original>MRPWGQEE</original>
    <variation>LRHGGRKSEGHGHIYDSQHHYN</variation>
    <location>
        <begin position="515"/>
        <end position="522"/>
    </location>
</feature>
<accession>Q92109</accession>
<accession>P10609</accession>
<accession>P79829</accession>
<proteinExistence type="evidence at transcript level"/>
<protein>
    <recommendedName>
        <fullName>Cytochrome P450 1A3</fullName>
        <shortName>CYP1A3</shortName>
        <ecNumber>1.14.14.1</ecNumber>
    </recommendedName>
    <alternativeName>
        <fullName>CYP1A1</fullName>
    </alternativeName>
</protein>
<gene>
    <name type="primary">cyp1a3</name>
</gene>
<reference key="1">
    <citation type="journal article" date="1994" name="Arch. Biochem. Biophys.">
        <title>Two unique CYP1 genes are expressed in response to 3-methylcholanthrene treatment in rainbow trout.</title>
        <authorList>
            <person name="Berndtson A.K."/>
            <person name="Chen T.T."/>
        </authorList>
    </citation>
    <scope>NUCLEOTIDE SEQUENCE [GENOMIC DNA]</scope>
    <source>
        <tissue>Liver</tissue>
    </source>
</reference>
<reference key="2">
    <citation type="submission" date="1997-01" db="EMBL/GenBank/DDBJ databases">
        <title>Cloning, sequencing and functional expression of two trout CYP1A cDNAs in yeast.</title>
        <authorList>
            <person name="Bailey G."/>
            <person name="You L."/>
            <person name="Harttig U."/>
        </authorList>
    </citation>
    <scope>NUCLEOTIDE SEQUENCE</scope>
</reference>
<reference key="3">
    <citation type="journal article" date="1988" name="DNA">
        <title>Trout P450IA1: cDNA and deduced protein sequence, expression in liver, and evolutionary significance.</title>
        <authorList>
            <person name="Heilmann L.J."/>
            <person name="Sheen Y.-Y."/>
            <person name="Bigelow S.W."/>
            <person name="Nebert D.W."/>
        </authorList>
    </citation>
    <scope>NUCLEOTIDE SEQUENCE [MRNA]</scope>
    <source>
        <tissue>Liver</tissue>
    </source>
</reference>
<organism>
    <name type="scientific">Oncorhynchus mykiss</name>
    <name type="common">Rainbow trout</name>
    <name type="synonym">Salmo gairdneri</name>
    <dbReference type="NCBI Taxonomy" id="8022"/>
    <lineage>
        <taxon>Eukaryota</taxon>
        <taxon>Metazoa</taxon>
        <taxon>Chordata</taxon>
        <taxon>Craniata</taxon>
        <taxon>Vertebrata</taxon>
        <taxon>Euteleostomi</taxon>
        <taxon>Actinopterygii</taxon>
        <taxon>Neopterygii</taxon>
        <taxon>Teleostei</taxon>
        <taxon>Protacanthopterygii</taxon>
        <taxon>Salmoniformes</taxon>
        <taxon>Salmonidae</taxon>
        <taxon>Salmoninae</taxon>
        <taxon>Oncorhynchus</taxon>
    </lineage>
</organism>
<evidence type="ECO:0000250" key="1"/>
<evidence type="ECO:0000305" key="2"/>
<comment type="function">
    <text>Cytochromes P450 are a group of heme-thiolate monooxygenases. They oxidize a variety of structurally unrelated compounds, including steroids, fatty acids, and xenobiotics.</text>
</comment>
<comment type="catalytic activity">
    <reaction>
        <text>an organic molecule + reduced [NADPH--hemoprotein reductase] + O2 = an alcohol + oxidized [NADPH--hemoprotein reductase] + H2O + H(+)</text>
        <dbReference type="Rhea" id="RHEA:17149"/>
        <dbReference type="Rhea" id="RHEA-COMP:11964"/>
        <dbReference type="Rhea" id="RHEA-COMP:11965"/>
        <dbReference type="ChEBI" id="CHEBI:15377"/>
        <dbReference type="ChEBI" id="CHEBI:15378"/>
        <dbReference type="ChEBI" id="CHEBI:15379"/>
        <dbReference type="ChEBI" id="CHEBI:30879"/>
        <dbReference type="ChEBI" id="CHEBI:57618"/>
        <dbReference type="ChEBI" id="CHEBI:58210"/>
        <dbReference type="ChEBI" id="CHEBI:142491"/>
        <dbReference type="EC" id="1.14.14.1"/>
    </reaction>
</comment>
<comment type="cofactor">
    <cofactor evidence="1">
        <name>heme</name>
        <dbReference type="ChEBI" id="CHEBI:30413"/>
    </cofactor>
</comment>
<comment type="subcellular location">
    <subcellularLocation>
        <location>Endoplasmic reticulum membrane</location>
        <topology>Peripheral membrane protein</topology>
    </subcellularLocation>
    <subcellularLocation>
        <location>Microsome membrane</location>
        <topology>Peripheral membrane protein</topology>
    </subcellularLocation>
</comment>
<comment type="tissue specificity">
    <text>Liver.</text>
</comment>
<comment type="induction">
    <text>By 3-methylcholanthrene (3MC).</text>
</comment>
<comment type="similarity">
    <text evidence="2">Belongs to the cytochrome P450 family.</text>
</comment>
<comment type="sequence caution" evidence="2">
    <conflict type="miscellaneous discrepancy">
        <sequence resource="EMBL-CDS" id="AAA49550"/>
    </conflict>
    <text>Chimera cDNA. Its C-terminal part has been shown to be derived from what is now known as the CYP1A1. CYP1A3 has also been called CYP1A1.</text>
</comment>
<name>CP1A3_ONCMY</name>